<gene>
    <name type="primary">FAHD1</name>
</gene>
<comment type="function">
    <text evidence="2">Tautomerase that converts enol-oxaloacetate, a strong inhibitor of succinate dehydrogenase, to the physiological keto form of oxaloacetate. It is thereby required to maximize aerobic respiration efficiency by preventing succinate dehydrogenase inhibition. Also acts as a weak oxaloacetate decarboxylase (ODx), catalyzing the decarboxylation of oxaloacetate (OAA) to pyruvate and CO(2), and as such is likely a regulatory enzyme in the TCA cycle. Also displays acylpyruvase activity, being able to hydrolyze acetylpyruvate and fumarylpyruvate in vitro.</text>
</comment>
<comment type="catalytic activity">
    <reaction evidence="2">
        <text>oxaloacetate = enol-oxaloacetate</text>
        <dbReference type="Rhea" id="RHEA:16021"/>
        <dbReference type="ChEBI" id="CHEBI:16452"/>
        <dbReference type="ChEBI" id="CHEBI:17479"/>
        <dbReference type="EC" id="5.3.2.2"/>
    </reaction>
    <physiologicalReaction direction="right-to-left" evidence="2">
        <dbReference type="Rhea" id="RHEA:16023"/>
    </physiologicalReaction>
</comment>
<comment type="catalytic activity">
    <reaction evidence="2">
        <text>oxaloacetate + H(+) = pyruvate + CO2</text>
        <dbReference type="Rhea" id="RHEA:15641"/>
        <dbReference type="ChEBI" id="CHEBI:15361"/>
        <dbReference type="ChEBI" id="CHEBI:15378"/>
        <dbReference type="ChEBI" id="CHEBI:16452"/>
        <dbReference type="ChEBI" id="CHEBI:16526"/>
        <dbReference type="EC" id="4.1.1.112"/>
    </reaction>
</comment>
<comment type="catalytic activity">
    <reaction evidence="2">
        <text>a 3-acylpyruvate + H2O = a carboxylate + pyruvate + H(+)</text>
        <dbReference type="Rhea" id="RHEA:19009"/>
        <dbReference type="ChEBI" id="CHEBI:15361"/>
        <dbReference type="ChEBI" id="CHEBI:15377"/>
        <dbReference type="ChEBI" id="CHEBI:15378"/>
        <dbReference type="ChEBI" id="CHEBI:29067"/>
        <dbReference type="ChEBI" id="CHEBI:57278"/>
        <dbReference type="EC" id="3.7.1.5"/>
    </reaction>
</comment>
<comment type="catalytic activity">
    <reaction evidence="2">
        <text>acetylpyruvate + H2O = acetate + pyruvate + H(+)</text>
        <dbReference type="Rhea" id="RHEA:16097"/>
        <dbReference type="ChEBI" id="CHEBI:15360"/>
        <dbReference type="ChEBI" id="CHEBI:15361"/>
        <dbReference type="ChEBI" id="CHEBI:15377"/>
        <dbReference type="ChEBI" id="CHEBI:15378"/>
        <dbReference type="ChEBI" id="CHEBI:30089"/>
    </reaction>
</comment>
<comment type="catalytic activity">
    <reaction evidence="2">
        <text>3-fumarylpyruvate + H2O = fumarate + pyruvate + H(+)</text>
        <dbReference type="Rhea" id="RHEA:26168"/>
        <dbReference type="ChEBI" id="CHEBI:15361"/>
        <dbReference type="ChEBI" id="CHEBI:15377"/>
        <dbReference type="ChEBI" id="CHEBI:15378"/>
        <dbReference type="ChEBI" id="CHEBI:16854"/>
        <dbReference type="ChEBI" id="CHEBI:29806"/>
    </reaction>
</comment>
<comment type="cofactor">
    <cofactor evidence="2">
        <name>Mg(2+)</name>
        <dbReference type="ChEBI" id="CHEBI:18420"/>
    </cofactor>
    <cofactor evidence="2">
        <name>Mn(2+)</name>
        <dbReference type="ChEBI" id="CHEBI:29035"/>
    </cofactor>
    <text evidence="2">Requires a divalent metal cation for activity.</text>
</comment>
<comment type="activity regulation">
    <text evidence="3">Oxaloacetate decarboxylation is competitively inhibited by oxalate.</text>
</comment>
<comment type="subunit">
    <text evidence="2">Homodimer.</text>
</comment>
<comment type="subcellular location">
    <subcellularLocation>
        <location evidence="2">Mitochondrion</location>
    </subcellularLocation>
    <subcellularLocation>
        <location evidence="2">Cytoplasm</location>
        <location evidence="2">Cytosol</location>
    </subcellularLocation>
</comment>
<comment type="similarity">
    <text evidence="5">Belongs to the FAH family.</text>
</comment>
<comment type="sequence caution" evidence="5">
    <conflict type="erroneous initiation">
        <sequence resource="EMBL-CDS" id="CAH90047"/>
    </conflict>
    <text>Extended N-terminus.</text>
</comment>
<feature type="transit peptide" description="Mitochondrion" evidence="4">
    <location>
        <begin position="1"/>
        <end position="24"/>
    </location>
</feature>
<feature type="chain" id="PRO_0000156831" description="Oxaloacetate tautomerase FAHD1, mitochondrial">
    <location>
        <begin position="25"/>
        <end position="221"/>
    </location>
</feature>
<feature type="binding site" evidence="2">
    <location>
        <position position="68"/>
    </location>
    <ligand>
        <name>Mg(2+)</name>
        <dbReference type="ChEBI" id="CHEBI:18420"/>
    </ligand>
</feature>
<feature type="binding site" evidence="2">
    <location>
        <position position="70"/>
    </location>
    <ligand>
        <name>Mg(2+)</name>
        <dbReference type="ChEBI" id="CHEBI:18420"/>
    </ligand>
</feature>
<feature type="binding site" evidence="2">
    <location>
        <position position="99"/>
    </location>
    <ligand>
        <name>Mg(2+)</name>
        <dbReference type="ChEBI" id="CHEBI:18420"/>
    </ligand>
</feature>
<feature type="modified residue" description="Phosphoserine" evidence="1">
    <location>
        <position position="37"/>
    </location>
</feature>
<feature type="modified residue" description="N6-acetyllysine" evidence="3">
    <location>
        <position position="110"/>
    </location>
</feature>
<feature type="modified residue" description="N6-succinyllysine" evidence="3">
    <location>
        <position position="112"/>
    </location>
</feature>
<accession>Q5RDW0</accession>
<keyword id="KW-0007">Acetylation</keyword>
<keyword id="KW-0963">Cytoplasm</keyword>
<keyword id="KW-0378">Hydrolase</keyword>
<keyword id="KW-0413">Isomerase</keyword>
<keyword id="KW-0456">Lyase</keyword>
<keyword id="KW-0460">Magnesium</keyword>
<keyword id="KW-0464">Manganese</keyword>
<keyword id="KW-0479">Metal-binding</keyword>
<keyword id="KW-0496">Mitochondrion</keyword>
<keyword id="KW-0597">Phosphoprotein</keyword>
<keyword id="KW-1185">Reference proteome</keyword>
<keyword id="KW-0809">Transit peptide</keyword>
<organism>
    <name type="scientific">Pongo abelii</name>
    <name type="common">Sumatran orangutan</name>
    <name type="synonym">Pongo pygmaeus abelii</name>
    <dbReference type="NCBI Taxonomy" id="9601"/>
    <lineage>
        <taxon>Eukaryota</taxon>
        <taxon>Metazoa</taxon>
        <taxon>Chordata</taxon>
        <taxon>Craniata</taxon>
        <taxon>Vertebrata</taxon>
        <taxon>Euteleostomi</taxon>
        <taxon>Mammalia</taxon>
        <taxon>Eutheria</taxon>
        <taxon>Euarchontoglires</taxon>
        <taxon>Primates</taxon>
        <taxon>Haplorrhini</taxon>
        <taxon>Catarrhini</taxon>
        <taxon>Hominidae</taxon>
        <taxon>Pongo</taxon>
    </lineage>
</organism>
<sequence>MAASRPLSRFWEWGKNIVCVGRNYADHVREMRSAVLSEPVLFLKPSTAYAPEGSPILMPAYTRNLHHELELGVVMGRRCRAVPEAAAMDYVGGYALCLDMTARDVQDECKKKGLPWTLAKSFTASCPVSAFVPKEKIPDPHKLKLWLKVNGELRQEGETSSMIFSIPYIISYVSKIITLEEGDIILTGTPKGVGPVKENDEIEAGIHGLVSMRFKVEKPEY</sequence>
<name>FAHD1_PONAB</name>
<reference key="1">
    <citation type="submission" date="2004-11" db="EMBL/GenBank/DDBJ databases">
        <authorList>
            <consortium name="The German cDNA consortium"/>
        </authorList>
    </citation>
    <scope>NUCLEOTIDE SEQUENCE [LARGE SCALE MRNA]</scope>
    <source>
        <tissue>Kidney</tissue>
    </source>
</reference>
<dbReference type="EC" id="5.3.2.2" evidence="2"/>
<dbReference type="EC" id="3.7.1.5" evidence="2"/>
<dbReference type="EC" id="4.1.1.112" evidence="2"/>
<dbReference type="EMBL" id="CR857783">
    <property type="protein sequence ID" value="CAH90047.1"/>
    <property type="status" value="ALT_INIT"/>
    <property type="molecule type" value="mRNA"/>
</dbReference>
<dbReference type="RefSeq" id="NP_001124978.1">
    <property type="nucleotide sequence ID" value="NM_001131506.1"/>
</dbReference>
<dbReference type="SMR" id="Q5RDW0"/>
<dbReference type="FunCoup" id="Q5RDW0">
    <property type="interactions" value="2265"/>
</dbReference>
<dbReference type="STRING" id="9601.ENSPPYP00000007888"/>
<dbReference type="GeneID" id="100171851"/>
<dbReference type="KEGG" id="pon:100171851"/>
<dbReference type="CTD" id="81889"/>
<dbReference type="eggNOG" id="KOG1535">
    <property type="taxonomic scope" value="Eukaryota"/>
</dbReference>
<dbReference type="HOGENOM" id="CLU_028458_5_0_1"/>
<dbReference type="InParanoid" id="Q5RDW0"/>
<dbReference type="OrthoDB" id="411064at2759"/>
<dbReference type="TreeFam" id="TF300911"/>
<dbReference type="Proteomes" id="UP000001595">
    <property type="component" value="Chromosome 16"/>
</dbReference>
<dbReference type="GO" id="GO:0005829">
    <property type="term" value="C:cytosol"/>
    <property type="evidence" value="ECO:0000250"/>
    <property type="project" value="UniProtKB"/>
</dbReference>
<dbReference type="GO" id="GO:0005739">
    <property type="term" value="C:mitochondrion"/>
    <property type="evidence" value="ECO:0000250"/>
    <property type="project" value="UniProtKB"/>
</dbReference>
<dbReference type="GO" id="GO:0018773">
    <property type="term" value="F:acetylpyruvate hydrolase activity"/>
    <property type="evidence" value="ECO:0000250"/>
    <property type="project" value="UniProtKB"/>
</dbReference>
<dbReference type="GO" id="GO:0047621">
    <property type="term" value="F:acylpyruvate hydrolase activity"/>
    <property type="evidence" value="ECO:0007669"/>
    <property type="project" value="UniProtKB-EC"/>
</dbReference>
<dbReference type="GO" id="GO:0034545">
    <property type="term" value="F:fumarylpyruvate hydrolase activity"/>
    <property type="evidence" value="ECO:0000250"/>
    <property type="project" value="UniProtKB"/>
</dbReference>
<dbReference type="GO" id="GO:0046872">
    <property type="term" value="F:metal ion binding"/>
    <property type="evidence" value="ECO:0007669"/>
    <property type="project" value="UniProtKB-KW"/>
</dbReference>
<dbReference type="GO" id="GO:0008948">
    <property type="term" value="F:oxaloacetate decarboxylase activity"/>
    <property type="evidence" value="ECO:0000250"/>
    <property type="project" value="UniProtKB"/>
</dbReference>
<dbReference type="GO" id="GO:0050163">
    <property type="term" value="F:oxaloacetate tautomerase activity"/>
    <property type="evidence" value="ECO:0000250"/>
    <property type="project" value="UniProtKB"/>
</dbReference>
<dbReference type="GO" id="GO:0006107">
    <property type="term" value="P:oxaloacetate metabolic process"/>
    <property type="evidence" value="ECO:0000250"/>
    <property type="project" value="UniProtKB"/>
</dbReference>
<dbReference type="FunFam" id="3.90.850.10:FF:000003">
    <property type="entry name" value="Fumarylacetoacetate hydrolase domain-containing 1"/>
    <property type="match status" value="1"/>
</dbReference>
<dbReference type="Gene3D" id="3.90.850.10">
    <property type="entry name" value="Fumarylacetoacetase-like, C-terminal domain"/>
    <property type="match status" value="1"/>
</dbReference>
<dbReference type="InterPro" id="IPR011234">
    <property type="entry name" value="Fumarylacetoacetase-like_C"/>
</dbReference>
<dbReference type="InterPro" id="IPR036663">
    <property type="entry name" value="Fumarylacetoacetase_C_sf"/>
</dbReference>
<dbReference type="NCBIfam" id="NF007967">
    <property type="entry name" value="PRK10691.1"/>
    <property type="match status" value="1"/>
</dbReference>
<dbReference type="PANTHER" id="PTHR11820">
    <property type="entry name" value="ACYLPYRUVASE"/>
    <property type="match status" value="1"/>
</dbReference>
<dbReference type="PANTHER" id="PTHR11820:SF7">
    <property type="entry name" value="ACYLPYRUVASE FAHD1, MITOCHONDRIAL"/>
    <property type="match status" value="1"/>
</dbReference>
<dbReference type="Pfam" id="PF01557">
    <property type="entry name" value="FAA_hydrolase"/>
    <property type="match status" value="1"/>
</dbReference>
<dbReference type="SUPFAM" id="SSF56529">
    <property type="entry name" value="FAH"/>
    <property type="match status" value="1"/>
</dbReference>
<protein>
    <recommendedName>
        <fullName evidence="5">Oxaloacetate tautomerase FAHD1, mitochondrial</fullName>
        <ecNumber evidence="2">5.3.2.2</ecNumber>
    </recommendedName>
    <alternativeName>
        <fullName>Acylpyruvase FAHD1</fullName>
        <ecNumber evidence="2">3.7.1.5</ecNumber>
    </alternativeName>
    <alternativeName>
        <fullName>Fumarylacetoacetate hydrolase domain-containing protein 1</fullName>
    </alternativeName>
    <alternativeName>
        <fullName evidence="2">Oxaloacetate decarboxylase</fullName>
        <shortName evidence="2">OAA decarboxylase</shortName>
        <ecNumber evidence="2">4.1.1.112</ecNumber>
    </alternativeName>
</protein>
<evidence type="ECO:0000250" key="1">
    <source>
        <dbReference type="UniProtKB" id="Q6AYQ8"/>
    </source>
</evidence>
<evidence type="ECO:0000250" key="2">
    <source>
        <dbReference type="UniProtKB" id="Q6P587"/>
    </source>
</evidence>
<evidence type="ECO:0000250" key="3">
    <source>
        <dbReference type="UniProtKB" id="Q8R0F8"/>
    </source>
</evidence>
<evidence type="ECO:0000255" key="4"/>
<evidence type="ECO:0000305" key="5"/>
<proteinExistence type="evidence at transcript level"/>